<sequence length="121" mass="13680">MSRVKRGVTARARHKKVLNQAKGYYGARSRVYRVAKQAVIKAGQYAYRDRKVKKRTFRSLWIVRINAAARQHDISYSQLINGLNKAGVELDRKALAELAVYNKDAFAAVVEKAKAALAYII</sequence>
<reference key="1">
    <citation type="journal article" date="2009" name="PLoS Pathog.">
        <title>Molecular evolutionary consequences of niche restriction in Francisella tularensis, a facultative intracellular pathogen.</title>
        <authorList>
            <person name="Larsson P."/>
            <person name="Elfsmark D."/>
            <person name="Svensson K."/>
            <person name="Wikstroem P."/>
            <person name="Forsman M."/>
            <person name="Brettin T."/>
            <person name="Keim P."/>
            <person name="Johansson A."/>
        </authorList>
    </citation>
    <scope>NUCLEOTIDE SEQUENCE [LARGE SCALE GENOMIC DNA]</scope>
    <source>
        <strain>FSC147</strain>
    </source>
</reference>
<name>RL20_FRATM</name>
<organism>
    <name type="scientific">Francisella tularensis subsp. mediasiatica (strain FSC147)</name>
    <dbReference type="NCBI Taxonomy" id="441952"/>
    <lineage>
        <taxon>Bacteria</taxon>
        <taxon>Pseudomonadati</taxon>
        <taxon>Pseudomonadota</taxon>
        <taxon>Gammaproteobacteria</taxon>
        <taxon>Thiotrichales</taxon>
        <taxon>Francisellaceae</taxon>
        <taxon>Francisella</taxon>
    </lineage>
</organism>
<feature type="chain" id="PRO_1000122320" description="Large ribosomal subunit protein bL20">
    <location>
        <begin position="1"/>
        <end position="121"/>
    </location>
</feature>
<keyword id="KW-0687">Ribonucleoprotein</keyword>
<keyword id="KW-0689">Ribosomal protein</keyword>
<keyword id="KW-0694">RNA-binding</keyword>
<keyword id="KW-0699">rRNA-binding</keyword>
<protein>
    <recommendedName>
        <fullName evidence="1">Large ribosomal subunit protein bL20</fullName>
    </recommendedName>
    <alternativeName>
        <fullName evidence="2">50S ribosomal protein L20</fullName>
    </alternativeName>
</protein>
<comment type="function">
    <text evidence="1">Binds directly to 23S ribosomal RNA and is necessary for the in vitro assembly process of the 50S ribosomal subunit. It is not involved in the protein synthesizing functions of that subunit.</text>
</comment>
<comment type="similarity">
    <text evidence="1">Belongs to the bacterial ribosomal protein bL20 family.</text>
</comment>
<accession>B2SGS0</accession>
<dbReference type="EMBL" id="CP000915">
    <property type="protein sequence ID" value="ACD30930.1"/>
    <property type="molecule type" value="Genomic_DNA"/>
</dbReference>
<dbReference type="SMR" id="B2SGS0"/>
<dbReference type="KEGG" id="ftm:FTM_1015"/>
<dbReference type="HOGENOM" id="CLU_123265_0_1_6"/>
<dbReference type="GO" id="GO:1990904">
    <property type="term" value="C:ribonucleoprotein complex"/>
    <property type="evidence" value="ECO:0007669"/>
    <property type="project" value="UniProtKB-KW"/>
</dbReference>
<dbReference type="GO" id="GO:0005840">
    <property type="term" value="C:ribosome"/>
    <property type="evidence" value="ECO:0007669"/>
    <property type="project" value="UniProtKB-KW"/>
</dbReference>
<dbReference type="GO" id="GO:0019843">
    <property type="term" value="F:rRNA binding"/>
    <property type="evidence" value="ECO:0007669"/>
    <property type="project" value="UniProtKB-UniRule"/>
</dbReference>
<dbReference type="GO" id="GO:0003735">
    <property type="term" value="F:structural constituent of ribosome"/>
    <property type="evidence" value="ECO:0007669"/>
    <property type="project" value="InterPro"/>
</dbReference>
<dbReference type="GO" id="GO:0000027">
    <property type="term" value="P:ribosomal large subunit assembly"/>
    <property type="evidence" value="ECO:0007669"/>
    <property type="project" value="UniProtKB-UniRule"/>
</dbReference>
<dbReference type="GO" id="GO:0006412">
    <property type="term" value="P:translation"/>
    <property type="evidence" value="ECO:0007669"/>
    <property type="project" value="InterPro"/>
</dbReference>
<dbReference type="CDD" id="cd07026">
    <property type="entry name" value="Ribosomal_L20"/>
    <property type="match status" value="1"/>
</dbReference>
<dbReference type="FunFam" id="1.10.1900.20:FF:000001">
    <property type="entry name" value="50S ribosomal protein L20"/>
    <property type="match status" value="1"/>
</dbReference>
<dbReference type="Gene3D" id="6.10.160.10">
    <property type="match status" value="1"/>
</dbReference>
<dbReference type="Gene3D" id="1.10.1900.20">
    <property type="entry name" value="Ribosomal protein L20"/>
    <property type="match status" value="1"/>
</dbReference>
<dbReference type="HAMAP" id="MF_00382">
    <property type="entry name" value="Ribosomal_bL20"/>
    <property type="match status" value="1"/>
</dbReference>
<dbReference type="InterPro" id="IPR005813">
    <property type="entry name" value="Ribosomal_bL20"/>
</dbReference>
<dbReference type="InterPro" id="IPR049946">
    <property type="entry name" value="RIBOSOMAL_L20_CS"/>
</dbReference>
<dbReference type="InterPro" id="IPR035566">
    <property type="entry name" value="Ribosomal_protein_bL20_C"/>
</dbReference>
<dbReference type="NCBIfam" id="TIGR01032">
    <property type="entry name" value="rplT_bact"/>
    <property type="match status" value="1"/>
</dbReference>
<dbReference type="PANTHER" id="PTHR10986">
    <property type="entry name" value="39S RIBOSOMAL PROTEIN L20"/>
    <property type="match status" value="1"/>
</dbReference>
<dbReference type="Pfam" id="PF00453">
    <property type="entry name" value="Ribosomal_L20"/>
    <property type="match status" value="1"/>
</dbReference>
<dbReference type="PRINTS" id="PR00062">
    <property type="entry name" value="RIBOSOMALL20"/>
</dbReference>
<dbReference type="SUPFAM" id="SSF74731">
    <property type="entry name" value="Ribosomal protein L20"/>
    <property type="match status" value="1"/>
</dbReference>
<dbReference type="PROSITE" id="PS00937">
    <property type="entry name" value="RIBOSOMAL_L20"/>
    <property type="match status" value="1"/>
</dbReference>
<gene>
    <name evidence="1" type="primary">rplT</name>
    <name type="ordered locus">FTM_1015</name>
</gene>
<proteinExistence type="inferred from homology"/>
<evidence type="ECO:0000255" key="1">
    <source>
        <dbReference type="HAMAP-Rule" id="MF_00382"/>
    </source>
</evidence>
<evidence type="ECO:0000305" key="2"/>